<proteinExistence type="evidence at protein level"/>
<feature type="chain" id="PRO_0000199503" description="MADS-box protein FBP24">
    <location>
        <begin position="1"/>
        <end position="268"/>
    </location>
</feature>
<feature type="domain" description="MADS-box" evidence="1">
    <location>
        <begin position="4"/>
        <end position="64"/>
    </location>
</feature>
<feature type="domain" description="K-box" evidence="2">
    <location>
        <begin position="88"/>
        <end position="178"/>
    </location>
</feature>
<feature type="region of interest" description="Disordered" evidence="3">
    <location>
        <begin position="243"/>
        <end position="268"/>
    </location>
</feature>
<sequence length="268" mass="31119">MIIMGRGKIEVKRIENKTSRQVTFSKRRAGLLKKTHELSVLCDAQIGLIIFSSKGKLFEYCSQPHSMSQIISRYLQTTGASLPVEDNRVQLYDEVAKMRRDTLNLQLSLQRYKGDDLSLAQYEELNELEKQLEHALNKIRARKLELMQQQMENLKKTEKMLEKENHDMYQWLMNNQMYKQESAAMDHEDHHHHHEHQQAITELNLLGEQPLLSHFTFFGDQEQPSTSTVNHFASISLTSPPANSISPYRLQPSHPNLQDSHVHGPSYD</sequence>
<evidence type="ECO:0000255" key="1">
    <source>
        <dbReference type="PROSITE-ProRule" id="PRU00251"/>
    </source>
</evidence>
<evidence type="ECO:0000255" key="2">
    <source>
        <dbReference type="PROSITE-ProRule" id="PRU00629"/>
    </source>
</evidence>
<evidence type="ECO:0000256" key="3">
    <source>
        <dbReference type="SAM" id="MobiDB-lite"/>
    </source>
</evidence>
<evidence type="ECO:0000305" key="4"/>
<organism>
    <name type="scientific">Petunia hybrida</name>
    <name type="common">Petunia</name>
    <dbReference type="NCBI Taxonomy" id="4102"/>
    <lineage>
        <taxon>Eukaryota</taxon>
        <taxon>Viridiplantae</taxon>
        <taxon>Streptophyta</taxon>
        <taxon>Embryophyta</taxon>
        <taxon>Tracheophyta</taxon>
        <taxon>Spermatophyta</taxon>
        <taxon>Magnoliopsida</taxon>
        <taxon>eudicotyledons</taxon>
        <taxon>Gunneridae</taxon>
        <taxon>Pentapetalae</taxon>
        <taxon>asterids</taxon>
        <taxon>lamiids</taxon>
        <taxon>Solanales</taxon>
        <taxon>Solanaceae</taxon>
        <taxon>Petunioideae</taxon>
        <taxon>Petunia</taxon>
    </lineage>
</organism>
<dbReference type="EMBL" id="AF335242">
    <property type="protein sequence ID" value="AAK21255.1"/>
    <property type="molecule type" value="mRNA"/>
</dbReference>
<dbReference type="SMR" id="Q9ATE5"/>
<dbReference type="IntAct" id="Q9ATE5">
    <property type="interactions" value="5"/>
</dbReference>
<dbReference type="GO" id="GO:0005634">
    <property type="term" value="C:nucleus"/>
    <property type="evidence" value="ECO:0007669"/>
    <property type="project" value="UniProtKB-SubCell"/>
</dbReference>
<dbReference type="GO" id="GO:0003700">
    <property type="term" value="F:DNA-binding transcription factor activity"/>
    <property type="evidence" value="ECO:0007669"/>
    <property type="project" value="InterPro"/>
</dbReference>
<dbReference type="GO" id="GO:0046983">
    <property type="term" value="F:protein dimerization activity"/>
    <property type="evidence" value="ECO:0007669"/>
    <property type="project" value="InterPro"/>
</dbReference>
<dbReference type="GO" id="GO:0000977">
    <property type="term" value="F:RNA polymerase II transcription regulatory region sequence-specific DNA binding"/>
    <property type="evidence" value="ECO:0007669"/>
    <property type="project" value="InterPro"/>
</dbReference>
<dbReference type="GO" id="GO:0045944">
    <property type="term" value="P:positive regulation of transcription by RNA polymerase II"/>
    <property type="evidence" value="ECO:0007669"/>
    <property type="project" value="InterPro"/>
</dbReference>
<dbReference type="CDD" id="cd00265">
    <property type="entry name" value="MADS_MEF2_like"/>
    <property type="match status" value="1"/>
</dbReference>
<dbReference type="FunFam" id="3.40.1810.10:FF:000003">
    <property type="entry name" value="MADS-box transcription factor MADS-MC"/>
    <property type="match status" value="1"/>
</dbReference>
<dbReference type="Gene3D" id="3.40.1810.10">
    <property type="entry name" value="Transcription factor, MADS-box"/>
    <property type="match status" value="1"/>
</dbReference>
<dbReference type="InterPro" id="IPR050142">
    <property type="entry name" value="MADS-box/MEF2_TF"/>
</dbReference>
<dbReference type="InterPro" id="IPR033896">
    <property type="entry name" value="MEF2-like_N"/>
</dbReference>
<dbReference type="InterPro" id="IPR002487">
    <property type="entry name" value="TF_Kbox"/>
</dbReference>
<dbReference type="InterPro" id="IPR002100">
    <property type="entry name" value="TF_MADSbox"/>
</dbReference>
<dbReference type="InterPro" id="IPR036879">
    <property type="entry name" value="TF_MADSbox_sf"/>
</dbReference>
<dbReference type="PANTHER" id="PTHR48019">
    <property type="entry name" value="SERUM RESPONSE FACTOR HOMOLOG"/>
    <property type="match status" value="1"/>
</dbReference>
<dbReference type="Pfam" id="PF01486">
    <property type="entry name" value="K-box"/>
    <property type="match status" value="1"/>
</dbReference>
<dbReference type="Pfam" id="PF00319">
    <property type="entry name" value="SRF-TF"/>
    <property type="match status" value="1"/>
</dbReference>
<dbReference type="PRINTS" id="PR00404">
    <property type="entry name" value="MADSDOMAIN"/>
</dbReference>
<dbReference type="SMART" id="SM00432">
    <property type="entry name" value="MADS"/>
    <property type="match status" value="1"/>
</dbReference>
<dbReference type="SUPFAM" id="SSF55455">
    <property type="entry name" value="SRF-like"/>
    <property type="match status" value="1"/>
</dbReference>
<dbReference type="PROSITE" id="PS51297">
    <property type="entry name" value="K_BOX"/>
    <property type="match status" value="1"/>
</dbReference>
<dbReference type="PROSITE" id="PS00350">
    <property type="entry name" value="MADS_BOX_1"/>
    <property type="match status" value="1"/>
</dbReference>
<dbReference type="PROSITE" id="PS50066">
    <property type="entry name" value="MADS_BOX_2"/>
    <property type="match status" value="1"/>
</dbReference>
<keyword id="KW-0238">DNA-binding</keyword>
<keyword id="KW-0539">Nucleus</keyword>
<keyword id="KW-0804">Transcription</keyword>
<keyword id="KW-0805">Transcription regulation</keyword>
<name>FBP24_PETHY</name>
<comment type="function">
    <text>Probable transcription factor.</text>
</comment>
<comment type="interaction">
    <interactant intactId="EBI-972007">
        <id>Q9ATE5</id>
    </interactant>
    <interactant intactId="EBI-531636">
        <id>Q40882</id>
        <label>fbp11</label>
    </interactant>
    <organismsDiffer>false</organismsDiffer>
    <experiments>5</experiments>
</comment>
<comment type="interaction">
    <interactant intactId="EBI-972007">
        <id>Q9ATE5</id>
    </interactant>
    <interactant intactId="EBI-531655">
        <id>Q03489</id>
        <label>FBP2</label>
    </interactant>
    <organismsDiffer>false</organismsDiffer>
    <experiments>5</experiments>
</comment>
<comment type="subcellular location">
    <subcellularLocation>
        <location evidence="1">Nucleus</location>
    </subcellularLocation>
</comment>
<comment type="caution">
    <text evidence="4">It is uncertain whether Met-1 or Met-4 is the initiator.</text>
</comment>
<protein>
    <recommendedName>
        <fullName>MADS-box protein FBP24</fullName>
    </recommendedName>
    <alternativeName>
        <fullName>Floral-binding protein 24</fullName>
    </alternativeName>
</protein>
<accession>Q9ATE5</accession>
<reference key="1">
    <citation type="submission" date="2001-01" db="EMBL/GenBank/DDBJ databases">
        <title>Petunia hybrida MADS-box transcription factor FBP24.</title>
        <authorList>
            <person name="Ferrario S."/>
            <person name="Busscher-Lange J."/>
            <person name="Busscher M."/>
            <person name="Angenent G."/>
        </authorList>
    </citation>
    <scope>NUCLEOTIDE SEQUENCE [MRNA]</scope>
    <source>
        <strain>cv. W115</strain>
    </source>
</reference>
<gene>
    <name type="primary">FBP24</name>
</gene>